<feature type="chain" id="PRO_0000224655" description="UDP-N-acetylenolpyruvoylglucosamine reductase 2">
    <location>
        <begin position="1"/>
        <end position="305"/>
    </location>
</feature>
<feature type="domain" description="FAD-binding PCMH-type" evidence="1">
    <location>
        <begin position="33"/>
        <end position="197"/>
    </location>
</feature>
<feature type="active site" evidence="1">
    <location>
        <position position="176"/>
    </location>
</feature>
<feature type="active site" description="Proton donor" evidence="1">
    <location>
        <position position="226"/>
    </location>
</feature>
<feature type="active site" evidence="1">
    <location>
        <position position="296"/>
    </location>
</feature>
<accession>Q72Y09</accession>
<name>MURB2_BACC1</name>
<organism>
    <name type="scientific">Bacillus cereus (strain ATCC 10987 / NRS 248)</name>
    <dbReference type="NCBI Taxonomy" id="222523"/>
    <lineage>
        <taxon>Bacteria</taxon>
        <taxon>Bacillati</taxon>
        <taxon>Bacillota</taxon>
        <taxon>Bacilli</taxon>
        <taxon>Bacillales</taxon>
        <taxon>Bacillaceae</taxon>
        <taxon>Bacillus</taxon>
        <taxon>Bacillus cereus group</taxon>
    </lineage>
</organism>
<evidence type="ECO:0000255" key="1">
    <source>
        <dbReference type="HAMAP-Rule" id="MF_00037"/>
    </source>
</evidence>
<keyword id="KW-0131">Cell cycle</keyword>
<keyword id="KW-0132">Cell division</keyword>
<keyword id="KW-0133">Cell shape</keyword>
<keyword id="KW-0961">Cell wall biogenesis/degradation</keyword>
<keyword id="KW-0963">Cytoplasm</keyword>
<keyword id="KW-0274">FAD</keyword>
<keyword id="KW-0285">Flavoprotein</keyword>
<keyword id="KW-0521">NADP</keyword>
<keyword id="KW-0560">Oxidoreductase</keyword>
<keyword id="KW-0573">Peptidoglycan synthesis</keyword>
<sequence>MNMQEVYEYLSTVLPEGHVKQDEMLKNHTHIKVGGKADVFVAPTNYDEIQEVIKYANKYNIPVTFLGNGSNVIIKDGGIRGITVSLIHITGVTVTGTTIVAQCGAAIIDVSRIALEHNLTGLEFACGIPGSVGGALYMNAGAYGGEISYVLTEAVVMTGDGELRTLTKEAFEFGYRKSVFANNHYIILEARFELEEGVYEEIKAKMDDLTFKRESKQPLEYPSCGSVFKRPPNNFAGKLIQESGLQGKRIGGVEVSLKHAGFMVNVDNGTAQDYIDLIHFVQKTVEEKFGVKLEREVRIIGEDKE</sequence>
<comment type="function">
    <text evidence="1">Cell wall formation.</text>
</comment>
<comment type="catalytic activity">
    <reaction evidence="1">
        <text>UDP-N-acetyl-alpha-D-muramate + NADP(+) = UDP-N-acetyl-3-O-(1-carboxyvinyl)-alpha-D-glucosamine + NADPH + H(+)</text>
        <dbReference type="Rhea" id="RHEA:12248"/>
        <dbReference type="ChEBI" id="CHEBI:15378"/>
        <dbReference type="ChEBI" id="CHEBI:57783"/>
        <dbReference type="ChEBI" id="CHEBI:58349"/>
        <dbReference type="ChEBI" id="CHEBI:68483"/>
        <dbReference type="ChEBI" id="CHEBI:70757"/>
        <dbReference type="EC" id="1.3.1.98"/>
    </reaction>
</comment>
<comment type="cofactor">
    <cofactor evidence="1">
        <name>FAD</name>
        <dbReference type="ChEBI" id="CHEBI:57692"/>
    </cofactor>
</comment>
<comment type="pathway">
    <text evidence="1">Cell wall biogenesis; peptidoglycan biosynthesis.</text>
</comment>
<comment type="subcellular location">
    <subcellularLocation>
        <location evidence="1">Cytoplasm</location>
    </subcellularLocation>
</comment>
<comment type="similarity">
    <text evidence="1">Belongs to the MurB family.</text>
</comment>
<reference key="1">
    <citation type="journal article" date="2004" name="Nucleic Acids Res.">
        <title>The genome sequence of Bacillus cereus ATCC 10987 reveals metabolic adaptations and a large plasmid related to Bacillus anthracis pXO1.</title>
        <authorList>
            <person name="Rasko D.A."/>
            <person name="Ravel J."/>
            <person name="Oekstad O.A."/>
            <person name="Helgason E."/>
            <person name="Cer R.Z."/>
            <person name="Jiang L."/>
            <person name="Shores K.A."/>
            <person name="Fouts D.E."/>
            <person name="Tourasse N.J."/>
            <person name="Angiuoli S.V."/>
            <person name="Kolonay J.F."/>
            <person name="Nelson W.C."/>
            <person name="Kolstoe A.-B."/>
            <person name="Fraser C.M."/>
            <person name="Read T.D."/>
        </authorList>
    </citation>
    <scope>NUCLEOTIDE SEQUENCE [LARGE SCALE GENOMIC DNA]</scope>
    <source>
        <strain>ATCC 10987 / NRS 248</strain>
    </source>
</reference>
<dbReference type="EC" id="1.3.1.98" evidence="1"/>
<dbReference type="EMBL" id="AE017194">
    <property type="protein sequence ID" value="AAS44113.1"/>
    <property type="molecule type" value="Genomic_DNA"/>
</dbReference>
<dbReference type="SMR" id="Q72Y09"/>
<dbReference type="KEGG" id="bca:BCE_5212"/>
<dbReference type="HOGENOM" id="CLU_035304_1_1_9"/>
<dbReference type="UniPathway" id="UPA00219"/>
<dbReference type="Proteomes" id="UP000002527">
    <property type="component" value="Chromosome"/>
</dbReference>
<dbReference type="GO" id="GO:0005829">
    <property type="term" value="C:cytosol"/>
    <property type="evidence" value="ECO:0007669"/>
    <property type="project" value="TreeGrafter"/>
</dbReference>
<dbReference type="GO" id="GO:0071949">
    <property type="term" value="F:FAD binding"/>
    <property type="evidence" value="ECO:0007669"/>
    <property type="project" value="InterPro"/>
</dbReference>
<dbReference type="GO" id="GO:0008762">
    <property type="term" value="F:UDP-N-acetylmuramate dehydrogenase activity"/>
    <property type="evidence" value="ECO:0007669"/>
    <property type="project" value="UniProtKB-UniRule"/>
</dbReference>
<dbReference type="GO" id="GO:0051301">
    <property type="term" value="P:cell division"/>
    <property type="evidence" value="ECO:0007669"/>
    <property type="project" value="UniProtKB-KW"/>
</dbReference>
<dbReference type="GO" id="GO:0071555">
    <property type="term" value="P:cell wall organization"/>
    <property type="evidence" value="ECO:0007669"/>
    <property type="project" value="UniProtKB-KW"/>
</dbReference>
<dbReference type="GO" id="GO:0009252">
    <property type="term" value="P:peptidoglycan biosynthetic process"/>
    <property type="evidence" value="ECO:0007669"/>
    <property type="project" value="UniProtKB-UniRule"/>
</dbReference>
<dbReference type="GO" id="GO:0008360">
    <property type="term" value="P:regulation of cell shape"/>
    <property type="evidence" value="ECO:0007669"/>
    <property type="project" value="UniProtKB-KW"/>
</dbReference>
<dbReference type="FunFam" id="3.90.78.10:FF:000001">
    <property type="entry name" value="UDP-N-acetylenolpyruvoylglucosamine reductase"/>
    <property type="match status" value="1"/>
</dbReference>
<dbReference type="Gene3D" id="3.30.465.10">
    <property type="match status" value="1"/>
</dbReference>
<dbReference type="Gene3D" id="3.90.78.10">
    <property type="entry name" value="UDP-N-acetylenolpyruvoylglucosamine reductase, C-terminal domain"/>
    <property type="match status" value="1"/>
</dbReference>
<dbReference type="Gene3D" id="3.30.43.10">
    <property type="entry name" value="Uridine Diphospho-n-acetylenolpyruvylglucosamine Reductase, domain 2"/>
    <property type="match status" value="1"/>
</dbReference>
<dbReference type="HAMAP" id="MF_00037">
    <property type="entry name" value="MurB"/>
    <property type="match status" value="1"/>
</dbReference>
<dbReference type="InterPro" id="IPR016166">
    <property type="entry name" value="FAD-bd_PCMH"/>
</dbReference>
<dbReference type="InterPro" id="IPR036318">
    <property type="entry name" value="FAD-bd_PCMH-like_sf"/>
</dbReference>
<dbReference type="InterPro" id="IPR016167">
    <property type="entry name" value="FAD-bd_PCMH_sub1"/>
</dbReference>
<dbReference type="InterPro" id="IPR016169">
    <property type="entry name" value="FAD-bd_PCMH_sub2"/>
</dbReference>
<dbReference type="InterPro" id="IPR003170">
    <property type="entry name" value="MurB"/>
</dbReference>
<dbReference type="InterPro" id="IPR011601">
    <property type="entry name" value="MurB_C"/>
</dbReference>
<dbReference type="InterPro" id="IPR036635">
    <property type="entry name" value="MurB_C_sf"/>
</dbReference>
<dbReference type="InterPro" id="IPR006094">
    <property type="entry name" value="Oxid_FAD_bind_N"/>
</dbReference>
<dbReference type="NCBIfam" id="TIGR00179">
    <property type="entry name" value="murB"/>
    <property type="match status" value="1"/>
</dbReference>
<dbReference type="NCBIfam" id="NF010480">
    <property type="entry name" value="PRK13905.1"/>
    <property type="match status" value="1"/>
</dbReference>
<dbReference type="PANTHER" id="PTHR21071">
    <property type="entry name" value="UDP-N-ACETYLENOLPYRUVOYLGLUCOSAMINE REDUCTASE"/>
    <property type="match status" value="1"/>
</dbReference>
<dbReference type="PANTHER" id="PTHR21071:SF4">
    <property type="entry name" value="UDP-N-ACETYLENOLPYRUVOYLGLUCOSAMINE REDUCTASE"/>
    <property type="match status" value="1"/>
</dbReference>
<dbReference type="Pfam" id="PF01565">
    <property type="entry name" value="FAD_binding_4"/>
    <property type="match status" value="1"/>
</dbReference>
<dbReference type="Pfam" id="PF02873">
    <property type="entry name" value="MurB_C"/>
    <property type="match status" value="1"/>
</dbReference>
<dbReference type="SUPFAM" id="SSF56176">
    <property type="entry name" value="FAD-binding/transporter-associated domain-like"/>
    <property type="match status" value="1"/>
</dbReference>
<dbReference type="SUPFAM" id="SSF56194">
    <property type="entry name" value="Uridine diphospho-N-Acetylenolpyruvylglucosamine reductase, MurB, C-terminal domain"/>
    <property type="match status" value="1"/>
</dbReference>
<dbReference type="PROSITE" id="PS51387">
    <property type="entry name" value="FAD_PCMH"/>
    <property type="match status" value="1"/>
</dbReference>
<protein>
    <recommendedName>
        <fullName evidence="1">UDP-N-acetylenolpyruvoylglucosamine reductase 2</fullName>
        <ecNumber evidence="1">1.3.1.98</ecNumber>
    </recommendedName>
    <alternativeName>
        <fullName evidence="1">UDP-N-acetylmuramate dehydrogenase 2</fullName>
    </alternativeName>
</protein>
<proteinExistence type="inferred from homology"/>
<gene>
    <name evidence="1" type="primary">murB2</name>
    <name type="ordered locus">BCE_5212</name>
</gene>